<feature type="chain" id="PRO_0000188835" description="4-hydroxythreonine-4-phosphate dehydrogenase">
    <location>
        <begin position="1"/>
        <end position="328"/>
    </location>
</feature>
<feature type="binding site" evidence="1">
    <location>
        <position position="134"/>
    </location>
    <ligand>
        <name>substrate</name>
    </ligand>
</feature>
<feature type="binding site" evidence="1">
    <location>
        <position position="135"/>
    </location>
    <ligand>
        <name>substrate</name>
    </ligand>
</feature>
<feature type="binding site" evidence="1">
    <location>
        <position position="164"/>
    </location>
    <ligand>
        <name>a divalent metal cation</name>
        <dbReference type="ChEBI" id="CHEBI:60240"/>
        <note>ligand shared between dimeric partners</note>
    </ligand>
</feature>
<feature type="binding site" evidence="1">
    <location>
        <position position="209"/>
    </location>
    <ligand>
        <name>a divalent metal cation</name>
        <dbReference type="ChEBI" id="CHEBI:60240"/>
        <note>ligand shared between dimeric partners</note>
    </ligand>
</feature>
<feature type="binding site" evidence="1">
    <location>
        <position position="265"/>
    </location>
    <ligand>
        <name>a divalent metal cation</name>
        <dbReference type="ChEBI" id="CHEBI:60240"/>
        <note>ligand shared between dimeric partners</note>
    </ligand>
</feature>
<feature type="binding site" evidence="1">
    <location>
        <position position="273"/>
    </location>
    <ligand>
        <name>substrate</name>
    </ligand>
</feature>
<feature type="binding site" evidence="1">
    <location>
        <position position="282"/>
    </location>
    <ligand>
        <name>substrate</name>
    </ligand>
</feature>
<feature type="binding site" evidence="1">
    <location>
        <position position="291"/>
    </location>
    <ligand>
        <name>substrate</name>
    </ligand>
</feature>
<organism>
    <name type="scientific">Vibrio vulnificus (strain CMCP6)</name>
    <dbReference type="NCBI Taxonomy" id="216895"/>
    <lineage>
        <taxon>Bacteria</taxon>
        <taxon>Pseudomonadati</taxon>
        <taxon>Pseudomonadota</taxon>
        <taxon>Gammaproteobacteria</taxon>
        <taxon>Vibrionales</taxon>
        <taxon>Vibrionaceae</taxon>
        <taxon>Vibrio</taxon>
    </lineage>
</organism>
<sequence>MVKRLVVTAGEPAGIGPDLVLALSKEHWPHQLVVCADKKMLAQRAEQLGINVTLLDYDASTAPSPQQAGTLVVEHIDMPSTCVAGQLNEENGHYVLKTLERAALGCMKSEFDAIVTGPVHKGVINRAGVAFSGHTEFFAELSNTPLVVMMLATEGLRVALVTTHIPLAYVSKAVTAERLLKIIDILHRDLVEKFAIAEPKIYVCGLNPHAGEDGCLGREEIETITPTLEKIRQEKGIHLLGPLPADTIFNEKYLNDADAVLGMYHDQVLPVLKYKGFGQSVNITLGLPFIRTSVDHGTALDLAGTGQADTGSFRTALQHAIELVEKKQ</sequence>
<dbReference type="EC" id="1.1.1.262" evidence="1"/>
<dbReference type="EMBL" id="AE016795">
    <property type="protein sequence ID" value="AAO09174.1"/>
    <property type="molecule type" value="Genomic_DNA"/>
</dbReference>
<dbReference type="RefSeq" id="WP_011078741.1">
    <property type="nucleotide sequence ID" value="NC_004459.3"/>
</dbReference>
<dbReference type="SMR" id="Q8DED3"/>
<dbReference type="KEGG" id="vvu:VV1_0662"/>
<dbReference type="HOGENOM" id="CLU_040168_2_0_6"/>
<dbReference type="UniPathway" id="UPA00244">
    <property type="reaction ID" value="UER00312"/>
</dbReference>
<dbReference type="Proteomes" id="UP000002275">
    <property type="component" value="Chromosome 1"/>
</dbReference>
<dbReference type="GO" id="GO:0005737">
    <property type="term" value="C:cytoplasm"/>
    <property type="evidence" value="ECO:0007669"/>
    <property type="project" value="UniProtKB-SubCell"/>
</dbReference>
<dbReference type="GO" id="GO:0050570">
    <property type="term" value="F:4-hydroxythreonine-4-phosphate dehydrogenase activity"/>
    <property type="evidence" value="ECO:0007669"/>
    <property type="project" value="UniProtKB-UniRule"/>
</dbReference>
<dbReference type="GO" id="GO:0050897">
    <property type="term" value="F:cobalt ion binding"/>
    <property type="evidence" value="ECO:0007669"/>
    <property type="project" value="UniProtKB-UniRule"/>
</dbReference>
<dbReference type="GO" id="GO:0000287">
    <property type="term" value="F:magnesium ion binding"/>
    <property type="evidence" value="ECO:0007669"/>
    <property type="project" value="UniProtKB-UniRule"/>
</dbReference>
<dbReference type="GO" id="GO:0051287">
    <property type="term" value="F:NAD binding"/>
    <property type="evidence" value="ECO:0007669"/>
    <property type="project" value="InterPro"/>
</dbReference>
<dbReference type="GO" id="GO:0008270">
    <property type="term" value="F:zinc ion binding"/>
    <property type="evidence" value="ECO:0007669"/>
    <property type="project" value="UniProtKB-UniRule"/>
</dbReference>
<dbReference type="GO" id="GO:0042823">
    <property type="term" value="P:pyridoxal phosphate biosynthetic process"/>
    <property type="evidence" value="ECO:0007669"/>
    <property type="project" value="UniProtKB-UniRule"/>
</dbReference>
<dbReference type="GO" id="GO:0008615">
    <property type="term" value="P:pyridoxine biosynthetic process"/>
    <property type="evidence" value="ECO:0007669"/>
    <property type="project" value="UniProtKB-UniRule"/>
</dbReference>
<dbReference type="Gene3D" id="3.40.718.10">
    <property type="entry name" value="Isopropylmalate Dehydrogenase"/>
    <property type="match status" value="1"/>
</dbReference>
<dbReference type="HAMAP" id="MF_00536">
    <property type="entry name" value="PdxA"/>
    <property type="match status" value="1"/>
</dbReference>
<dbReference type="InterPro" id="IPR037510">
    <property type="entry name" value="PdxA"/>
</dbReference>
<dbReference type="InterPro" id="IPR005255">
    <property type="entry name" value="PdxA_fam"/>
</dbReference>
<dbReference type="NCBIfam" id="TIGR00557">
    <property type="entry name" value="pdxA"/>
    <property type="match status" value="1"/>
</dbReference>
<dbReference type="PANTHER" id="PTHR30004">
    <property type="entry name" value="4-HYDROXYTHREONINE-4-PHOSPHATE DEHYDROGENASE"/>
    <property type="match status" value="1"/>
</dbReference>
<dbReference type="PANTHER" id="PTHR30004:SF5">
    <property type="entry name" value="4-HYDROXYTHREONINE-4-PHOSPHATE DEHYDROGENASE"/>
    <property type="match status" value="1"/>
</dbReference>
<dbReference type="Pfam" id="PF04166">
    <property type="entry name" value="PdxA"/>
    <property type="match status" value="1"/>
</dbReference>
<dbReference type="SUPFAM" id="SSF53659">
    <property type="entry name" value="Isocitrate/Isopropylmalate dehydrogenase-like"/>
    <property type="match status" value="1"/>
</dbReference>
<reference key="1">
    <citation type="submission" date="2002-12" db="EMBL/GenBank/DDBJ databases">
        <title>Complete genome sequence of Vibrio vulnificus CMCP6.</title>
        <authorList>
            <person name="Rhee J.H."/>
            <person name="Kim S.Y."/>
            <person name="Chung S.S."/>
            <person name="Kim J.J."/>
            <person name="Moon Y.H."/>
            <person name="Jeong H."/>
            <person name="Choy H.E."/>
        </authorList>
    </citation>
    <scope>NUCLEOTIDE SEQUENCE [LARGE SCALE GENOMIC DNA]</scope>
    <source>
        <strain>CMCP6</strain>
    </source>
</reference>
<comment type="function">
    <text evidence="1">Catalyzes the NAD(P)-dependent oxidation of 4-(phosphooxy)-L-threonine (HTP) into 2-amino-3-oxo-4-(phosphooxy)butyric acid which spontaneously decarboxylates to form 3-amino-2-oxopropyl phosphate (AHAP).</text>
</comment>
<comment type="catalytic activity">
    <reaction evidence="1">
        <text>4-(phosphooxy)-L-threonine + NAD(+) = 3-amino-2-oxopropyl phosphate + CO2 + NADH</text>
        <dbReference type="Rhea" id="RHEA:32275"/>
        <dbReference type="ChEBI" id="CHEBI:16526"/>
        <dbReference type="ChEBI" id="CHEBI:57279"/>
        <dbReference type="ChEBI" id="CHEBI:57540"/>
        <dbReference type="ChEBI" id="CHEBI:57945"/>
        <dbReference type="ChEBI" id="CHEBI:58452"/>
        <dbReference type="EC" id="1.1.1.262"/>
    </reaction>
</comment>
<comment type="cofactor">
    <cofactor evidence="1">
        <name>Zn(2+)</name>
        <dbReference type="ChEBI" id="CHEBI:29105"/>
    </cofactor>
    <cofactor evidence="1">
        <name>Mg(2+)</name>
        <dbReference type="ChEBI" id="CHEBI:18420"/>
    </cofactor>
    <cofactor evidence="1">
        <name>Co(2+)</name>
        <dbReference type="ChEBI" id="CHEBI:48828"/>
    </cofactor>
    <text evidence="1">Binds 1 divalent metal cation per subunit. Can use ions such as Zn(2+), Mg(2+) or Co(2+).</text>
</comment>
<comment type="pathway">
    <text evidence="1">Cofactor biosynthesis; pyridoxine 5'-phosphate biosynthesis; pyridoxine 5'-phosphate from D-erythrose 4-phosphate: step 4/5.</text>
</comment>
<comment type="subunit">
    <text evidence="1">Homodimer.</text>
</comment>
<comment type="subcellular location">
    <subcellularLocation>
        <location evidence="1">Cytoplasm</location>
    </subcellularLocation>
</comment>
<comment type="miscellaneous">
    <text evidence="1">The active site is located at the dimer interface.</text>
</comment>
<comment type="similarity">
    <text evidence="1">Belongs to the PdxA family.</text>
</comment>
<proteinExistence type="inferred from homology"/>
<accession>Q8DED3</accession>
<keyword id="KW-0170">Cobalt</keyword>
<keyword id="KW-0963">Cytoplasm</keyword>
<keyword id="KW-0460">Magnesium</keyword>
<keyword id="KW-0479">Metal-binding</keyword>
<keyword id="KW-0520">NAD</keyword>
<keyword id="KW-0521">NADP</keyword>
<keyword id="KW-0560">Oxidoreductase</keyword>
<keyword id="KW-0664">Pyridoxine biosynthesis</keyword>
<keyword id="KW-0862">Zinc</keyword>
<gene>
    <name evidence="1" type="primary">pdxA</name>
    <name type="ordered locus">VV1_0662</name>
</gene>
<name>PDXA_VIBVU</name>
<evidence type="ECO:0000255" key="1">
    <source>
        <dbReference type="HAMAP-Rule" id="MF_00536"/>
    </source>
</evidence>
<protein>
    <recommendedName>
        <fullName evidence="1">4-hydroxythreonine-4-phosphate dehydrogenase</fullName>
        <ecNumber evidence="1">1.1.1.262</ecNumber>
    </recommendedName>
    <alternativeName>
        <fullName evidence="1">4-(phosphohydroxy)-L-threonine dehydrogenase</fullName>
    </alternativeName>
</protein>